<gene>
    <name evidence="7" type="primary">LG2</name>
    <name evidence="9" type="ORF">GRMZM2G060216</name>
</gene>
<accession>O49067</accession>
<comment type="function">
    <text evidence="6">Required for the formation of the blade-sheath boundary in leaves. Promotes flowering.</text>
</comment>
<comment type="subunit">
    <text evidence="1">Binds DNA as a dimer.</text>
</comment>
<comment type="subcellular location">
    <subcellularLocation>
        <location evidence="2 3">Nucleus</location>
    </subcellularLocation>
</comment>
<comment type="tissue specificity">
    <text evidence="6">Expression in meristem/developing ligule regions.</text>
</comment>
<comment type="disruption phenotype">
    <text evidence="6">Defects in the formation of the blade-sheath boundary in leaves (e.g. absent or incorrectly positioned ligule and auricles) and delayed flowering.</text>
</comment>
<comment type="similarity">
    <text evidence="8">Belongs to the bZIP family.</text>
</comment>
<proteinExistence type="evidence at transcript level"/>
<feature type="chain" id="PRO_0000438996" description="Transcription factor LG2">
    <location>
        <begin position="1"/>
        <end position="531"/>
    </location>
</feature>
<feature type="domain" description="bZIP" evidence="3">
    <location>
        <begin position="220"/>
        <end position="264"/>
    </location>
</feature>
<feature type="domain" description="DOG1" evidence="4">
    <location>
        <begin position="285"/>
        <end position="499"/>
    </location>
</feature>
<feature type="region of interest" description="Disordered" evidence="5">
    <location>
        <begin position="115"/>
        <end position="154"/>
    </location>
</feature>
<feature type="region of interest" description="Disordered" evidence="5">
    <location>
        <begin position="195"/>
        <end position="220"/>
    </location>
</feature>
<feature type="region of interest" description="Basic motif" evidence="3">
    <location>
        <begin position="222"/>
        <end position="242"/>
    </location>
</feature>
<feature type="region of interest" description="Leucine-zipper" evidence="3">
    <location>
        <begin position="248"/>
        <end position="262"/>
    </location>
</feature>
<feature type="short sequence motif" description="Nuclear localization signal" evidence="2">
    <location>
        <begin position="224"/>
        <end position="231"/>
    </location>
</feature>
<feature type="compositionally biased region" description="Polar residues" evidence="5">
    <location>
        <begin position="116"/>
        <end position="154"/>
    </location>
</feature>
<name>LG2_MAIZE</name>
<reference key="1">
    <citation type="journal article" date="1998" name="Genes Dev.">
        <title>The maize gene liguleless2 encodes a basic leucine zipper protein involved in the establishment of the leaf blade-sheath boundary.</title>
        <authorList>
            <person name="Walsh J."/>
            <person name="Waters C.A."/>
            <person name="Freeling M."/>
        </authorList>
    </citation>
    <scope>NUCLEOTIDE SEQUENCE [MRNA]</scope>
    <scope>FUNCTION</scope>
    <scope>DISRUPTION PHENOTYPE</scope>
    <scope>TISSUE SPECIFICITY</scope>
</reference>
<reference key="2">
    <citation type="journal article" date="2009" name="Science">
        <title>The B73 maize genome: complexity, diversity, and dynamics.</title>
        <authorList>
            <person name="Schnable P.S."/>
            <person name="Ware D."/>
            <person name="Fulton R.S."/>
            <person name="Stein J.C."/>
            <person name="Wei F."/>
            <person name="Pasternak S."/>
            <person name="Liang C."/>
            <person name="Zhang J."/>
            <person name="Fulton L."/>
            <person name="Graves T.A."/>
            <person name="Minx P."/>
            <person name="Reily A.D."/>
            <person name="Courtney L."/>
            <person name="Kruchowski S.S."/>
            <person name="Tomlinson C."/>
            <person name="Strong C."/>
            <person name="Delehaunty K."/>
            <person name="Fronick C."/>
            <person name="Courtney B."/>
            <person name="Rock S.M."/>
            <person name="Belter E."/>
            <person name="Du F."/>
            <person name="Kim K."/>
            <person name="Abbott R.M."/>
            <person name="Cotton M."/>
            <person name="Levy A."/>
            <person name="Marchetto P."/>
            <person name="Ochoa K."/>
            <person name="Jackson S.M."/>
            <person name="Gillam B."/>
            <person name="Chen W."/>
            <person name="Yan L."/>
            <person name="Higginbotham J."/>
            <person name="Cardenas M."/>
            <person name="Waligorski J."/>
            <person name="Applebaum E."/>
            <person name="Phelps L."/>
            <person name="Falcone J."/>
            <person name="Kanchi K."/>
            <person name="Thane T."/>
            <person name="Scimone A."/>
            <person name="Thane N."/>
            <person name="Henke J."/>
            <person name="Wang T."/>
            <person name="Ruppert J."/>
            <person name="Shah N."/>
            <person name="Rotter K."/>
            <person name="Hodges J."/>
            <person name="Ingenthron E."/>
            <person name="Cordes M."/>
            <person name="Kohlberg S."/>
            <person name="Sgro J."/>
            <person name="Delgado B."/>
            <person name="Mead K."/>
            <person name="Chinwalla A."/>
            <person name="Leonard S."/>
            <person name="Crouse K."/>
            <person name="Collura K."/>
            <person name="Kudrna D."/>
            <person name="Currie J."/>
            <person name="He R."/>
            <person name="Angelova A."/>
            <person name="Rajasekar S."/>
            <person name="Mueller T."/>
            <person name="Lomeli R."/>
            <person name="Scara G."/>
            <person name="Ko A."/>
            <person name="Delaney K."/>
            <person name="Wissotski M."/>
            <person name="Lopez G."/>
            <person name="Campos D."/>
            <person name="Braidotti M."/>
            <person name="Ashley E."/>
            <person name="Golser W."/>
            <person name="Kim H."/>
            <person name="Lee S."/>
            <person name="Lin J."/>
            <person name="Dujmic Z."/>
            <person name="Kim W."/>
            <person name="Talag J."/>
            <person name="Zuccolo A."/>
            <person name="Fan C."/>
            <person name="Sebastian A."/>
            <person name="Kramer M."/>
            <person name="Spiegel L."/>
            <person name="Nascimento L."/>
            <person name="Zutavern T."/>
            <person name="Miller B."/>
            <person name="Ambroise C."/>
            <person name="Muller S."/>
            <person name="Spooner W."/>
            <person name="Narechania A."/>
            <person name="Ren L."/>
            <person name="Wei S."/>
            <person name="Kumari S."/>
            <person name="Faga B."/>
            <person name="Levy M.J."/>
            <person name="McMahan L."/>
            <person name="Van Buren P."/>
            <person name="Vaughn M.W."/>
            <person name="Ying K."/>
            <person name="Yeh C.-T."/>
            <person name="Emrich S.J."/>
            <person name="Jia Y."/>
            <person name="Kalyanaraman A."/>
            <person name="Hsia A.-P."/>
            <person name="Barbazuk W.B."/>
            <person name="Baucom R.S."/>
            <person name="Brutnell T.P."/>
            <person name="Carpita N.C."/>
            <person name="Chaparro C."/>
            <person name="Chia J.-M."/>
            <person name="Deragon J.-M."/>
            <person name="Estill J.C."/>
            <person name="Fu Y."/>
            <person name="Jeddeloh J.A."/>
            <person name="Han Y."/>
            <person name="Lee H."/>
            <person name="Li P."/>
            <person name="Lisch D.R."/>
            <person name="Liu S."/>
            <person name="Liu Z."/>
            <person name="Nagel D.H."/>
            <person name="McCann M.C."/>
            <person name="SanMiguel P."/>
            <person name="Myers A.M."/>
            <person name="Nettleton D."/>
            <person name="Nguyen J."/>
            <person name="Penning B.W."/>
            <person name="Ponnala L."/>
            <person name="Schneider K.L."/>
            <person name="Schwartz D.C."/>
            <person name="Sharma A."/>
            <person name="Soderlund C."/>
            <person name="Springer N.M."/>
            <person name="Sun Q."/>
            <person name="Wang H."/>
            <person name="Waterman M."/>
            <person name="Westerman R."/>
            <person name="Wolfgruber T.K."/>
            <person name="Yang L."/>
            <person name="Yu Y."/>
            <person name="Zhang L."/>
            <person name="Zhou S."/>
            <person name="Zhu Q."/>
            <person name="Bennetzen J.L."/>
            <person name="Dawe R.K."/>
            <person name="Jiang J."/>
            <person name="Jiang N."/>
            <person name="Presting G.G."/>
            <person name="Wessler S.R."/>
            <person name="Aluru S."/>
            <person name="Martienssen R.A."/>
            <person name="Clifton S.W."/>
            <person name="McCombie W.R."/>
            <person name="Wing R.A."/>
            <person name="Wilson R.K."/>
        </authorList>
    </citation>
    <scope>NUCLEOTIDE SEQUENCE [LARGE SCALE GENOMIC DNA]</scope>
    <source>
        <strain>cv. B73</strain>
    </source>
</reference>
<protein>
    <recommendedName>
        <fullName evidence="7">Transcription factor LG2</fullName>
    </recommendedName>
    <alternativeName>
        <fullName evidence="7">Protein LIGULELESS 2</fullName>
    </alternativeName>
    <alternativeName>
        <fullName evidence="7">Protein TGACG (TGA) motif-binding protein LG2</fullName>
    </alternativeName>
</protein>
<sequence>MVQGEESSWRMERAALPLNQALAYGVQAHAAAAAAPPTCFLDFQPAAASAAYFGFGELEEALIHGGGAASAGGGVDPGVIIKNDVAQAKSAAGYLAGAGTGRPPTLEIFPSWPMRHQQQLHSGNSQSVGSTGTDSSSAQNTMSQMELVSPASSAPRQEVMMVTTDDYSYKPGLAAAPAAAAPPSFQQHHPLPLQLHGGEGGGDHDKRKHGSTRKDGKLVDAKTERRLAQNREAARKSRLRKKAYVQQLETSRIRLQQVEHELQRARSQGLFVGGCSAAGDMSSGAAMFDMEYARWLDDDTKRLAELRGGLQAHLLDGNLGLIVEECMQHYDELFQLKAALARSDVFHLLTGSWATPAERCFFWMGGFRPSELLKILIPQLDPLTEQQLLGICNLQQSSEQAEEALAQGLHQLHQSLADTVAAGTLNDGAAAPNYMNIMAVALEKLASLENFYQQADNLRHQTLHQMRRILTTRQAARCFLSIGEYYSRLRALSNLWASRPRDNFIGTESLSPTATELQALHHQQQNQFAGF</sequence>
<evidence type="ECO:0000250" key="1">
    <source>
        <dbReference type="UniProtKB" id="Q39140"/>
    </source>
</evidence>
<evidence type="ECO:0000255" key="2">
    <source>
        <dbReference type="PROSITE-ProRule" id="PRU00768"/>
    </source>
</evidence>
<evidence type="ECO:0000255" key="3">
    <source>
        <dbReference type="PROSITE-ProRule" id="PRU00978"/>
    </source>
</evidence>
<evidence type="ECO:0000255" key="4">
    <source>
        <dbReference type="PROSITE-ProRule" id="PRU01147"/>
    </source>
</evidence>
<evidence type="ECO:0000256" key="5">
    <source>
        <dbReference type="SAM" id="MobiDB-lite"/>
    </source>
</evidence>
<evidence type="ECO:0000269" key="6">
    <source>
    </source>
</evidence>
<evidence type="ECO:0000303" key="7">
    <source>
    </source>
</evidence>
<evidence type="ECO:0000305" key="8"/>
<evidence type="ECO:0000312" key="9">
    <source>
        <dbReference type="EMBL" id="AAO45627.1"/>
    </source>
</evidence>
<organism>
    <name type="scientific">Zea mays</name>
    <name type="common">Maize</name>
    <dbReference type="NCBI Taxonomy" id="4577"/>
    <lineage>
        <taxon>Eukaryota</taxon>
        <taxon>Viridiplantae</taxon>
        <taxon>Streptophyta</taxon>
        <taxon>Embryophyta</taxon>
        <taxon>Tracheophyta</taxon>
        <taxon>Spermatophyta</taxon>
        <taxon>Magnoliopsida</taxon>
        <taxon>Liliopsida</taxon>
        <taxon>Poales</taxon>
        <taxon>Poaceae</taxon>
        <taxon>PACMAD clade</taxon>
        <taxon>Panicoideae</taxon>
        <taxon>Andropogonodae</taxon>
        <taxon>Andropogoneae</taxon>
        <taxon>Tripsacinae</taxon>
        <taxon>Zea</taxon>
    </lineage>
</organism>
<dbReference type="EMBL" id="AF036949">
    <property type="protein sequence ID" value="AAC39351.1"/>
    <property type="molecule type" value="mRNA"/>
</dbReference>
<dbReference type="EMBL" id="AY180106">
    <property type="protein sequence ID" value="AAO45627.1"/>
    <property type="molecule type" value="Genomic_DNA"/>
</dbReference>
<dbReference type="PIR" id="T01415">
    <property type="entry name" value="T01415"/>
</dbReference>
<dbReference type="RefSeq" id="NP_001104893.1">
    <property type="nucleotide sequence ID" value="NM_001111423.1"/>
</dbReference>
<dbReference type="SMR" id="O49067"/>
<dbReference type="STRING" id="4577.O49067"/>
<dbReference type="PaxDb" id="4577-GRMZM2G060216_P01"/>
<dbReference type="EnsemblPlants" id="Zm00001eb147220_T001">
    <property type="protein sequence ID" value="Zm00001eb147220_P001"/>
    <property type="gene ID" value="Zm00001eb147220"/>
</dbReference>
<dbReference type="GeneID" id="541670"/>
<dbReference type="Gramene" id="Zm00001eb147220_T001">
    <property type="protein sequence ID" value="Zm00001eb147220_P001"/>
    <property type="gene ID" value="Zm00001eb147220"/>
</dbReference>
<dbReference type="KEGG" id="zma:541670"/>
<dbReference type="MaizeGDB" id="219512"/>
<dbReference type="eggNOG" id="ENOG502QRFK">
    <property type="taxonomic scope" value="Eukaryota"/>
</dbReference>
<dbReference type="HOGENOM" id="CLU_024782_0_2_1"/>
<dbReference type="InParanoid" id="O49067"/>
<dbReference type="OrthoDB" id="2015618at2759"/>
<dbReference type="Proteomes" id="UP000007305">
    <property type="component" value="Chromosome 3"/>
</dbReference>
<dbReference type="ExpressionAtlas" id="O49067">
    <property type="expression patterns" value="baseline and differential"/>
</dbReference>
<dbReference type="GO" id="GO:0005634">
    <property type="term" value="C:nucleus"/>
    <property type="evidence" value="ECO:0007669"/>
    <property type="project" value="UniProtKB-SubCell"/>
</dbReference>
<dbReference type="GO" id="GO:0003700">
    <property type="term" value="F:DNA-binding transcription factor activity"/>
    <property type="evidence" value="ECO:0007669"/>
    <property type="project" value="InterPro"/>
</dbReference>
<dbReference type="GO" id="GO:0043565">
    <property type="term" value="F:sequence-specific DNA binding"/>
    <property type="evidence" value="ECO:0007669"/>
    <property type="project" value="InterPro"/>
</dbReference>
<dbReference type="GO" id="GO:0006351">
    <property type="term" value="P:DNA-templated transcription"/>
    <property type="evidence" value="ECO:0007669"/>
    <property type="project" value="InterPro"/>
</dbReference>
<dbReference type="GO" id="GO:1905623">
    <property type="term" value="P:positive regulation of leaf development"/>
    <property type="evidence" value="ECO:0000315"/>
    <property type="project" value="UniProtKB"/>
</dbReference>
<dbReference type="FunFam" id="1.20.5.170:FF:000019">
    <property type="entry name" value="BZIP family transcription factor"/>
    <property type="match status" value="1"/>
</dbReference>
<dbReference type="Gene3D" id="1.20.5.170">
    <property type="match status" value="1"/>
</dbReference>
<dbReference type="InterPro" id="IPR004827">
    <property type="entry name" value="bZIP"/>
</dbReference>
<dbReference type="InterPro" id="IPR046347">
    <property type="entry name" value="bZIP_sf"/>
</dbReference>
<dbReference type="InterPro" id="IPR025422">
    <property type="entry name" value="TGA_domain"/>
</dbReference>
<dbReference type="PANTHER" id="PTHR45693">
    <property type="entry name" value="TRANSCRIPTION FACTOR TGA9"/>
    <property type="match status" value="1"/>
</dbReference>
<dbReference type="PANTHER" id="PTHR45693:SF9">
    <property type="entry name" value="TRANSCRIPTION FACTOR TGA9"/>
    <property type="match status" value="1"/>
</dbReference>
<dbReference type="Pfam" id="PF00170">
    <property type="entry name" value="bZIP_1"/>
    <property type="match status" value="1"/>
</dbReference>
<dbReference type="Pfam" id="PF14144">
    <property type="entry name" value="DOG1"/>
    <property type="match status" value="1"/>
</dbReference>
<dbReference type="SMART" id="SM00338">
    <property type="entry name" value="BRLZ"/>
    <property type="match status" value="1"/>
</dbReference>
<dbReference type="SUPFAM" id="SSF57959">
    <property type="entry name" value="Leucine zipper domain"/>
    <property type="match status" value="1"/>
</dbReference>
<dbReference type="PROSITE" id="PS50217">
    <property type="entry name" value="BZIP"/>
    <property type="match status" value="1"/>
</dbReference>
<dbReference type="PROSITE" id="PS00036">
    <property type="entry name" value="BZIP_BASIC"/>
    <property type="match status" value="1"/>
</dbReference>
<dbReference type="PROSITE" id="PS51806">
    <property type="entry name" value="DOG1"/>
    <property type="match status" value="1"/>
</dbReference>
<keyword id="KW-0010">Activator</keyword>
<keyword id="KW-0238">DNA-binding</keyword>
<keyword id="KW-0539">Nucleus</keyword>
<keyword id="KW-1185">Reference proteome</keyword>
<keyword id="KW-0804">Transcription</keyword>
<keyword id="KW-0805">Transcription regulation</keyword>